<protein>
    <recommendedName>
        <fullName evidence="2">Formamidopyrimidine-DNA glycosylase</fullName>
        <shortName evidence="2">Fapy-DNA glycosylase</shortName>
        <ecNumber evidence="2">3.2.2.23</ecNumber>
    </recommendedName>
    <alternativeName>
        <fullName evidence="2">DNA-(apurinic or apyrimidinic site) lyase MutM</fullName>
        <shortName evidence="2">AP lyase MutM</shortName>
        <ecNumber evidence="2">4.2.99.18</ecNumber>
    </alternativeName>
</protein>
<dbReference type="EC" id="3.2.2.23" evidence="2"/>
<dbReference type="EC" id="4.2.99.18" evidence="2"/>
<dbReference type="EMBL" id="CP000698">
    <property type="protein sequence ID" value="ABQ27827.1"/>
    <property type="molecule type" value="Genomic_DNA"/>
</dbReference>
<dbReference type="RefSeq" id="WP_011940480.1">
    <property type="nucleotide sequence ID" value="NC_009483.1"/>
</dbReference>
<dbReference type="SMR" id="A5G7Q9"/>
<dbReference type="STRING" id="351605.Gura_3674"/>
<dbReference type="KEGG" id="gur:Gura_3674"/>
<dbReference type="HOGENOM" id="CLU_038423_1_1_7"/>
<dbReference type="OrthoDB" id="9800855at2"/>
<dbReference type="Proteomes" id="UP000006695">
    <property type="component" value="Chromosome"/>
</dbReference>
<dbReference type="GO" id="GO:0034039">
    <property type="term" value="F:8-oxo-7,8-dihydroguanine DNA N-glycosylase activity"/>
    <property type="evidence" value="ECO:0007669"/>
    <property type="project" value="TreeGrafter"/>
</dbReference>
<dbReference type="GO" id="GO:0140078">
    <property type="term" value="F:class I DNA-(apurinic or apyrimidinic site) endonuclease activity"/>
    <property type="evidence" value="ECO:0007669"/>
    <property type="project" value="UniProtKB-EC"/>
</dbReference>
<dbReference type="GO" id="GO:0003684">
    <property type="term" value="F:damaged DNA binding"/>
    <property type="evidence" value="ECO:0007669"/>
    <property type="project" value="InterPro"/>
</dbReference>
<dbReference type="GO" id="GO:0008270">
    <property type="term" value="F:zinc ion binding"/>
    <property type="evidence" value="ECO:0007669"/>
    <property type="project" value="UniProtKB-UniRule"/>
</dbReference>
<dbReference type="GO" id="GO:0006284">
    <property type="term" value="P:base-excision repair"/>
    <property type="evidence" value="ECO:0007669"/>
    <property type="project" value="InterPro"/>
</dbReference>
<dbReference type="CDD" id="cd08966">
    <property type="entry name" value="EcFpg-like_N"/>
    <property type="match status" value="1"/>
</dbReference>
<dbReference type="FunFam" id="1.10.8.50:FF:000003">
    <property type="entry name" value="Formamidopyrimidine-DNA glycosylase"/>
    <property type="match status" value="1"/>
</dbReference>
<dbReference type="FunFam" id="3.20.190.10:FF:000001">
    <property type="entry name" value="Formamidopyrimidine-DNA glycosylase"/>
    <property type="match status" value="1"/>
</dbReference>
<dbReference type="Gene3D" id="1.10.8.50">
    <property type="match status" value="1"/>
</dbReference>
<dbReference type="Gene3D" id="3.20.190.10">
    <property type="entry name" value="MutM-like, N-terminal"/>
    <property type="match status" value="1"/>
</dbReference>
<dbReference type="HAMAP" id="MF_00103">
    <property type="entry name" value="Fapy_DNA_glycosyl"/>
    <property type="match status" value="1"/>
</dbReference>
<dbReference type="InterPro" id="IPR015886">
    <property type="entry name" value="DNA_glyclase/AP_lyase_DNA-bd"/>
</dbReference>
<dbReference type="InterPro" id="IPR015887">
    <property type="entry name" value="DNA_glyclase_Znf_dom_DNA_BS"/>
</dbReference>
<dbReference type="InterPro" id="IPR020629">
    <property type="entry name" value="Formamido-pyr_DNA_Glyclase"/>
</dbReference>
<dbReference type="InterPro" id="IPR012319">
    <property type="entry name" value="FPG_cat"/>
</dbReference>
<dbReference type="InterPro" id="IPR035937">
    <property type="entry name" value="MutM-like_N-ter"/>
</dbReference>
<dbReference type="InterPro" id="IPR010979">
    <property type="entry name" value="Ribosomal_uS13-like_H2TH"/>
</dbReference>
<dbReference type="InterPro" id="IPR000214">
    <property type="entry name" value="Znf_DNA_glyclase/AP_lyase"/>
</dbReference>
<dbReference type="InterPro" id="IPR010663">
    <property type="entry name" value="Znf_FPG/IleRS"/>
</dbReference>
<dbReference type="NCBIfam" id="TIGR00577">
    <property type="entry name" value="fpg"/>
    <property type="match status" value="1"/>
</dbReference>
<dbReference type="NCBIfam" id="NF002211">
    <property type="entry name" value="PRK01103.1"/>
    <property type="match status" value="1"/>
</dbReference>
<dbReference type="PANTHER" id="PTHR22993">
    <property type="entry name" value="FORMAMIDOPYRIMIDINE-DNA GLYCOSYLASE"/>
    <property type="match status" value="1"/>
</dbReference>
<dbReference type="PANTHER" id="PTHR22993:SF9">
    <property type="entry name" value="FORMAMIDOPYRIMIDINE-DNA GLYCOSYLASE"/>
    <property type="match status" value="1"/>
</dbReference>
<dbReference type="Pfam" id="PF01149">
    <property type="entry name" value="Fapy_DNA_glyco"/>
    <property type="match status" value="1"/>
</dbReference>
<dbReference type="Pfam" id="PF06831">
    <property type="entry name" value="H2TH"/>
    <property type="match status" value="1"/>
</dbReference>
<dbReference type="Pfam" id="PF06827">
    <property type="entry name" value="zf-FPG_IleRS"/>
    <property type="match status" value="1"/>
</dbReference>
<dbReference type="SMART" id="SM00898">
    <property type="entry name" value="Fapy_DNA_glyco"/>
    <property type="match status" value="1"/>
</dbReference>
<dbReference type="SMART" id="SM01232">
    <property type="entry name" value="H2TH"/>
    <property type="match status" value="1"/>
</dbReference>
<dbReference type="SUPFAM" id="SSF57716">
    <property type="entry name" value="Glucocorticoid receptor-like (DNA-binding domain)"/>
    <property type="match status" value="1"/>
</dbReference>
<dbReference type="SUPFAM" id="SSF81624">
    <property type="entry name" value="N-terminal domain of MutM-like DNA repair proteins"/>
    <property type="match status" value="1"/>
</dbReference>
<dbReference type="SUPFAM" id="SSF46946">
    <property type="entry name" value="S13-like H2TH domain"/>
    <property type="match status" value="1"/>
</dbReference>
<dbReference type="PROSITE" id="PS51068">
    <property type="entry name" value="FPG_CAT"/>
    <property type="match status" value="1"/>
</dbReference>
<dbReference type="PROSITE" id="PS01242">
    <property type="entry name" value="ZF_FPG_1"/>
    <property type="match status" value="1"/>
</dbReference>
<dbReference type="PROSITE" id="PS51066">
    <property type="entry name" value="ZF_FPG_2"/>
    <property type="match status" value="1"/>
</dbReference>
<name>FPG_GEOUR</name>
<organism>
    <name type="scientific">Geotalea uraniireducens (strain Rf4)</name>
    <name type="common">Geobacter uraniireducens</name>
    <dbReference type="NCBI Taxonomy" id="351605"/>
    <lineage>
        <taxon>Bacteria</taxon>
        <taxon>Pseudomonadati</taxon>
        <taxon>Thermodesulfobacteriota</taxon>
        <taxon>Desulfuromonadia</taxon>
        <taxon>Geobacterales</taxon>
        <taxon>Geobacteraceae</taxon>
        <taxon>Geotalea</taxon>
    </lineage>
</organism>
<accession>A5G7Q9</accession>
<proteinExistence type="inferred from homology"/>
<comment type="function">
    <text evidence="2">Involved in base excision repair of DNA damaged by oxidation or by mutagenic agents. Acts as a DNA glycosylase that recognizes and removes damaged bases. Has a preference for oxidized purines, such as 7,8-dihydro-8-oxoguanine (8-oxoG). Has AP (apurinic/apyrimidinic) lyase activity and introduces nicks in the DNA strand. Cleaves the DNA backbone by beta-delta elimination to generate a single-strand break at the site of the removed base with both 3'- and 5'-phosphates.</text>
</comment>
<comment type="catalytic activity">
    <reaction evidence="2">
        <text>Hydrolysis of DNA containing ring-opened 7-methylguanine residues, releasing 2,6-diamino-4-hydroxy-5-(N-methyl)formamidopyrimidine.</text>
        <dbReference type="EC" id="3.2.2.23"/>
    </reaction>
</comment>
<comment type="catalytic activity">
    <reaction evidence="2">
        <text>2'-deoxyribonucleotide-(2'-deoxyribose 5'-phosphate)-2'-deoxyribonucleotide-DNA = a 3'-end 2'-deoxyribonucleotide-(2,3-dehydro-2,3-deoxyribose 5'-phosphate)-DNA + a 5'-end 5'-phospho-2'-deoxyribonucleoside-DNA + H(+)</text>
        <dbReference type="Rhea" id="RHEA:66592"/>
        <dbReference type="Rhea" id="RHEA-COMP:13180"/>
        <dbReference type="Rhea" id="RHEA-COMP:16897"/>
        <dbReference type="Rhea" id="RHEA-COMP:17067"/>
        <dbReference type="ChEBI" id="CHEBI:15378"/>
        <dbReference type="ChEBI" id="CHEBI:136412"/>
        <dbReference type="ChEBI" id="CHEBI:157695"/>
        <dbReference type="ChEBI" id="CHEBI:167181"/>
        <dbReference type="EC" id="4.2.99.18"/>
    </reaction>
</comment>
<comment type="cofactor">
    <cofactor evidence="2">
        <name>Zn(2+)</name>
        <dbReference type="ChEBI" id="CHEBI:29105"/>
    </cofactor>
    <text evidence="2">Binds 1 zinc ion per subunit.</text>
</comment>
<comment type="subunit">
    <text evidence="2">Monomer.</text>
</comment>
<comment type="similarity">
    <text evidence="2">Belongs to the FPG family.</text>
</comment>
<reference key="1">
    <citation type="submission" date="2007-05" db="EMBL/GenBank/DDBJ databases">
        <title>Complete sequence of Geobacter uraniireducens Rf4.</title>
        <authorList>
            <consortium name="US DOE Joint Genome Institute"/>
            <person name="Copeland A."/>
            <person name="Lucas S."/>
            <person name="Lapidus A."/>
            <person name="Barry K."/>
            <person name="Detter J.C."/>
            <person name="Glavina del Rio T."/>
            <person name="Hammon N."/>
            <person name="Israni S."/>
            <person name="Dalin E."/>
            <person name="Tice H."/>
            <person name="Pitluck S."/>
            <person name="Chertkov O."/>
            <person name="Brettin T."/>
            <person name="Bruce D."/>
            <person name="Han C."/>
            <person name="Schmutz J."/>
            <person name="Larimer F."/>
            <person name="Land M."/>
            <person name="Hauser L."/>
            <person name="Kyrpides N."/>
            <person name="Mikhailova N."/>
            <person name="Shelobolina E."/>
            <person name="Aklujkar M."/>
            <person name="Lovley D."/>
            <person name="Richardson P."/>
        </authorList>
    </citation>
    <scope>NUCLEOTIDE SEQUENCE [LARGE SCALE GENOMIC DNA]</scope>
    <source>
        <strain>ATCC BAA-1134 / JCM 13001 / Rf4</strain>
    </source>
</reference>
<keyword id="KW-0227">DNA damage</keyword>
<keyword id="KW-0234">DNA repair</keyword>
<keyword id="KW-0238">DNA-binding</keyword>
<keyword id="KW-0326">Glycosidase</keyword>
<keyword id="KW-0378">Hydrolase</keyword>
<keyword id="KW-0456">Lyase</keyword>
<keyword id="KW-0479">Metal-binding</keyword>
<keyword id="KW-0511">Multifunctional enzyme</keyword>
<keyword id="KW-1185">Reference proteome</keyword>
<keyword id="KW-0862">Zinc</keyword>
<keyword id="KW-0863">Zinc-finger</keyword>
<feature type="initiator methionine" description="Removed" evidence="1">
    <location>
        <position position="1"/>
    </location>
</feature>
<feature type="chain" id="PRO_1000075698" description="Formamidopyrimidine-DNA glycosylase">
    <location>
        <begin position="2"/>
        <end position="271"/>
    </location>
</feature>
<feature type="zinc finger region" description="FPG-type" evidence="2">
    <location>
        <begin position="237"/>
        <end position="271"/>
    </location>
</feature>
<feature type="active site" description="Schiff-base intermediate with DNA" evidence="2">
    <location>
        <position position="2"/>
    </location>
</feature>
<feature type="active site" description="Proton donor" evidence="2">
    <location>
        <position position="3"/>
    </location>
</feature>
<feature type="active site" description="Proton donor; for beta-elimination activity" evidence="2">
    <location>
        <position position="58"/>
    </location>
</feature>
<feature type="active site" description="Proton donor; for delta-elimination activity" evidence="2">
    <location>
        <position position="261"/>
    </location>
</feature>
<feature type="binding site" evidence="2">
    <location>
        <position position="91"/>
    </location>
    <ligand>
        <name>DNA</name>
        <dbReference type="ChEBI" id="CHEBI:16991"/>
    </ligand>
</feature>
<feature type="binding site" evidence="2">
    <location>
        <position position="110"/>
    </location>
    <ligand>
        <name>DNA</name>
        <dbReference type="ChEBI" id="CHEBI:16991"/>
    </ligand>
</feature>
<feature type="binding site" evidence="2">
    <location>
        <position position="152"/>
    </location>
    <ligand>
        <name>DNA</name>
        <dbReference type="ChEBI" id="CHEBI:16991"/>
    </ligand>
</feature>
<sequence length="271" mass="29837">MPELPEVETTRRGIAPYLVGKRICRVTVRTAKLRLPLQPDLDSILSGRIISAVERRGKYLLVRFTAGTLILHLGMTGNLRLVQADTPPGRHDHLDLVLNSGLCLRLTDPRRFSTIVWTHDDPLRHTLLAKHGPEPLTGDFSGDYLYTKSRGRRITVKQFIMDSRVLAGVGNIYACEALFRAGIHPETPAGALSTTHCLRLADTIKEVLTDAIASGGSTLGDFLVSEGKPGYFPMSFSVYGRNDAPCPGCGAPIRRSRQGGRSTYFCDRCQH</sequence>
<evidence type="ECO:0000250" key="1"/>
<evidence type="ECO:0000255" key="2">
    <source>
        <dbReference type="HAMAP-Rule" id="MF_00103"/>
    </source>
</evidence>
<gene>
    <name evidence="2" type="primary">mutM</name>
    <name evidence="2" type="synonym">fpg</name>
    <name type="ordered locus">Gura_3674</name>
</gene>